<organism>
    <name type="scientific">Murid herpesvirus 1 (strain K181)</name>
    <name type="common">MuHV-1</name>
    <name type="synonym">Mouse cytomegalovirus</name>
    <dbReference type="NCBI Taxonomy" id="69156"/>
    <lineage>
        <taxon>Viruses</taxon>
        <taxon>Duplodnaviria</taxon>
        <taxon>Heunggongvirae</taxon>
        <taxon>Peploviricota</taxon>
        <taxon>Herviviricetes</taxon>
        <taxon>Herpesvirales</taxon>
        <taxon>Orthoherpesviridae</taxon>
        <taxon>Betaherpesvirinae</taxon>
        <taxon>Muromegalovirus</taxon>
        <taxon>Muromegalovirus muridbeta1</taxon>
        <taxon>Murid herpesvirus 1</taxon>
    </lineage>
</organism>
<accession>P52368</accession>
<accession>A8E1L7</accession>
<reference key="1">
    <citation type="journal article" date="2005" name="J. Virol.">
        <title>Use of a murine cytomegalovirus K181-derived bacterial artificial chromosome as a vaccine vector for immunocontraception.</title>
        <authorList>
            <person name="Redwood A.J."/>
            <person name="Messerle M."/>
            <person name="Harvey N.L."/>
            <person name="Hardy C.M."/>
            <person name="Kozinowski U.H."/>
            <person name="Lawson M.A."/>
            <person name="Shellam G.R."/>
        </authorList>
    </citation>
    <scope>NUCLEOTIDE SEQUENCE [GENOMIC DNA]</scope>
</reference>
<reference key="2">
    <citation type="journal article" date="2008" name="J. Virol.">
        <title>Laboratory strains of murine cytomegalovirus are genetically similar to but phenotypically distinct from wild strains of virus.</title>
        <authorList>
            <person name="Smith L.M."/>
            <person name="McWhorter A.R."/>
            <person name="Masters L.L."/>
            <person name="Shellam G.R."/>
            <person name="Redwood A.J."/>
        </authorList>
    </citation>
    <scope>NUCLEOTIDE SEQUENCE [GENOMIC DNA]</scope>
</reference>
<reference key="3">
    <citation type="journal article" date="1995" name="J. Gen. Virol.">
        <title>DNA sequence and transcriptional analysis of the glycoprotein M gene of murine cytomegalovirus.</title>
        <authorList>
            <person name="Scalzo A.A."/>
            <person name="Forbes C.A."/>
            <person name="Davis-Poynter N.J."/>
            <person name="Farrell H.E."/>
            <person name="Lyons P.A."/>
        </authorList>
    </citation>
    <scope>NUCLEOTIDE SEQUENCE [GENOMIC DNA] OF 34-112</scope>
</reference>
<organismHost>
    <name type="scientific">Mus musculus</name>
    <name type="common">Mouse</name>
    <dbReference type="NCBI Taxonomy" id="10090"/>
</organismHost>
<sequence length="112" mass="11850">MGAECCKQLCRSLHPYAADSLKDSSGRRVDLGTEFSVLTDTSDDEDQVGAGERDDFVQKQLTTPLLSDKNSAIPLTVVTPIQLGANKGGGKRTSSLKSAKNGAGVKKKVRAL</sequence>
<evidence type="ECO:0000255" key="1">
    <source>
        <dbReference type="HAMAP-Rule" id="MF_04041"/>
    </source>
</evidence>
<evidence type="ECO:0000256" key="2">
    <source>
        <dbReference type="SAM" id="MobiDB-lite"/>
    </source>
</evidence>
<gene>
    <name type="primary">UL99</name>
</gene>
<dbReference type="EMBL" id="AM886412">
    <property type="protein sequence ID" value="CAP08138.1"/>
    <property type="molecule type" value="Genomic_DNA"/>
</dbReference>
<dbReference type="EMBL" id="L41088">
    <property type="protein sequence ID" value="AAC13737.1"/>
    <property type="molecule type" value="Genomic_DNA"/>
</dbReference>
<dbReference type="Proteomes" id="UP000158680">
    <property type="component" value="Segment"/>
</dbReference>
<dbReference type="GO" id="GO:0044178">
    <property type="term" value="C:host cell Golgi membrane"/>
    <property type="evidence" value="ECO:0007669"/>
    <property type="project" value="UniProtKB-SubCell"/>
</dbReference>
<dbReference type="GO" id="GO:0020002">
    <property type="term" value="C:host cell plasma membrane"/>
    <property type="evidence" value="ECO:0007669"/>
    <property type="project" value="UniProtKB-SubCell"/>
</dbReference>
<dbReference type="GO" id="GO:0016020">
    <property type="term" value="C:membrane"/>
    <property type="evidence" value="ECO:0007669"/>
    <property type="project" value="UniProtKB-KW"/>
</dbReference>
<dbReference type="GO" id="GO:0019033">
    <property type="term" value="C:viral tegument"/>
    <property type="evidence" value="ECO:0007669"/>
    <property type="project" value="UniProtKB-SubCell"/>
</dbReference>
<dbReference type="GO" id="GO:0055036">
    <property type="term" value="C:virion membrane"/>
    <property type="evidence" value="ECO:0007669"/>
    <property type="project" value="UniProtKB-SubCell"/>
</dbReference>
<dbReference type="GO" id="GO:0046760">
    <property type="term" value="P:viral budding from Golgi membrane"/>
    <property type="evidence" value="ECO:0007669"/>
    <property type="project" value="UniProtKB-UniRule"/>
</dbReference>
<dbReference type="HAMAP" id="MF_04041">
    <property type="entry name" value="HSV_CEP3_betahv"/>
    <property type="match status" value="1"/>
</dbReference>
<dbReference type="InterPro" id="IPR020170">
    <property type="entry name" value="Herpes_UL11_megaloV/roseoloV"/>
</dbReference>
<dbReference type="InterPro" id="IPR034705">
    <property type="entry name" value="HSV_CEP3_betahv"/>
</dbReference>
<dbReference type="Pfam" id="PF17474">
    <property type="entry name" value="U71"/>
    <property type="match status" value="1"/>
</dbReference>
<feature type="initiator methionine" description="Removed; by host" evidence="1">
    <location>
        <position position="1"/>
    </location>
</feature>
<feature type="chain" id="PRO_0000115343" description="Cytoplasmic envelopment protein 3" evidence="1">
    <location>
        <begin position="2"/>
        <end position="112"/>
    </location>
</feature>
<feature type="region of interest" description="Disordered" evidence="2">
    <location>
        <begin position="84"/>
        <end position="112"/>
    </location>
</feature>
<feature type="lipid moiety-binding region" description="N-myristoyl glycine; by host" evidence="1">
    <location>
        <position position="2"/>
    </location>
</feature>
<protein>
    <recommendedName>
        <fullName evidence="1">Cytoplasmic envelopment protein 3</fullName>
    </recommendedName>
</protein>
<proteinExistence type="inferred from homology"/>
<name>CEP3_MUHVK</name>
<keyword id="KW-1032">Host cell membrane</keyword>
<keyword id="KW-1040">Host Golgi apparatus</keyword>
<keyword id="KW-1043">Host membrane</keyword>
<keyword id="KW-0449">Lipoprotein</keyword>
<keyword id="KW-0472">Membrane</keyword>
<keyword id="KW-0519">Myristate</keyword>
<keyword id="KW-0564">Palmitate</keyword>
<keyword id="KW-0597">Phosphoprotein</keyword>
<keyword id="KW-1185">Reference proteome</keyword>
<keyword id="KW-0946">Virion</keyword>
<keyword id="KW-0920">Virion tegument</keyword>
<comment type="function">
    <text evidence="1">Plays an important role in the cytoplasmic envelopment of tegument proteins and capsids during the assembly and egress processes. Also participates in viral entry at the fusion step probably by regulating the core fusion machinery.</text>
</comment>
<comment type="subunit">
    <text evidence="1">Interacts with cytoplasmic envelopment protein 2; this interaction is essential for the proper localization of each protein to the assembly complex and thus for the production of infectious virus.</text>
</comment>
<comment type="subcellular location">
    <subcellularLocation>
        <location evidence="1">Virion tegument</location>
    </subcellularLocation>
    <subcellularLocation>
        <location evidence="1">Virion membrane</location>
        <topology evidence="1">Lipid-anchor</topology>
    </subcellularLocation>
    <subcellularLocation>
        <location evidence="1">Host cell membrane</location>
        <topology evidence="1">Lipid-anchor</topology>
        <orientation evidence="1">Cytoplasmic side</orientation>
    </subcellularLocation>
    <subcellularLocation>
        <location evidence="1">Host Golgi apparatus membrane</location>
        <topology evidence="1">Lipid-anchor</topology>
        <orientation evidence="1">Cytoplasmic side</orientation>
    </subcellularLocation>
    <text evidence="1">Virion membrane-associated tegument protein. Associates with host membrane lipids rafts. During virion morphogenesis, this protein probably accumulates in the endosomes and trans-Golgi where secondary envelopment occurs. It is probably transported to the cell surface from where it is endocytosed and directed to the trans-Golgi network (TGN).</text>
</comment>
<comment type="PTM">
    <text evidence="1">Myristoylation and palmitoylation (probably on one or more of the nearby cysteines at the N-terminus) enable membrane-binding and Golgi apparatus-specific targeting and are essential for efficient packaging.</text>
</comment>
<comment type="PTM">
    <text evidence="1">Phosphorylated. Phosphorylation does not seem to be required for recycling to the host Golgi apparatus. Packaging is selective for underphosphorylated forms.</text>
</comment>
<comment type="similarity">
    <text evidence="1">Belongs to the herpesviridae cytoplasmic envelopment protein 3 family.</text>
</comment>